<accession>Q9LHJ3</accession>
<accession>Q3EB25</accession>
<evidence type="ECO:0000255" key="1"/>
<evidence type="ECO:0000256" key="2">
    <source>
        <dbReference type="SAM" id="MobiDB-lite"/>
    </source>
</evidence>
<evidence type="ECO:0000269" key="3">
    <source>
    </source>
</evidence>
<evidence type="ECO:0000303" key="4">
    <source>
    </source>
</evidence>
<evidence type="ECO:0000305" key="5"/>
<evidence type="ECO:0000312" key="6">
    <source>
        <dbReference type="Araport" id="AT3G22240"/>
    </source>
</evidence>
<evidence type="ECO:0000312" key="7">
    <source>
        <dbReference type="EMBL" id="BAB01942.1"/>
    </source>
</evidence>
<name>CSTM9_ARATH</name>
<feature type="chain" id="PRO_0000454806" description="Protein CYSTEINE-RICH TRANSMEMBRANE MODULE 9">
    <location>
        <begin position="1"/>
        <end position="72"/>
    </location>
</feature>
<feature type="transmembrane region" description="Helical" evidence="1">
    <location>
        <begin position="49"/>
        <end position="65"/>
    </location>
</feature>
<feature type="region of interest" description="Disordered" evidence="2">
    <location>
        <begin position="1"/>
        <end position="46"/>
    </location>
</feature>
<feature type="compositionally biased region" description="Polar residues" evidence="2">
    <location>
        <begin position="1"/>
        <end position="22"/>
    </location>
</feature>
<gene>
    <name evidence="4" type="primary">CYSTM9</name>
    <name evidence="6" type="ordered locus">At3g22240</name>
    <name evidence="7" type="ORF">MMP21.2</name>
</gene>
<protein>
    <recommendedName>
        <fullName evidence="4">Protein CYSTEINE-RICH TRANSMEMBRANE MODULE 9</fullName>
        <shortName evidence="4">AthCYSTM9</shortName>
    </recommendedName>
</protein>
<dbReference type="EMBL" id="AP002046">
    <property type="protein sequence ID" value="BAB01942.1"/>
    <property type="molecule type" value="Genomic_DNA"/>
</dbReference>
<dbReference type="EMBL" id="CP002686">
    <property type="protein sequence ID" value="AEE76611.1"/>
    <property type="molecule type" value="Genomic_DNA"/>
</dbReference>
<dbReference type="EMBL" id="AK175604">
    <property type="protein sequence ID" value="BAD43367.1"/>
    <property type="molecule type" value="mRNA"/>
</dbReference>
<dbReference type="EMBL" id="AK175675">
    <property type="protein sequence ID" value="BAD43438.1"/>
    <property type="molecule type" value="mRNA"/>
</dbReference>
<dbReference type="EMBL" id="AK176204">
    <property type="protein sequence ID" value="BAD43967.1"/>
    <property type="molecule type" value="mRNA"/>
</dbReference>
<dbReference type="EMBL" id="AK176400">
    <property type="protein sequence ID" value="BAD44163.1"/>
    <property type="molecule type" value="mRNA"/>
</dbReference>
<dbReference type="EMBL" id="AK176502">
    <property type="protein sequence ID" value="BAD44265.1"/>
    <property type="molecule type" value="mRNA"/>
</dbReference>
<dbReference type="EMBL" id="AY087581">
    <property type="protein sequence ID" value="AAM65123.1"/>
    <property type="molecule type" value="mRNA"/>
</dbReference>
<dbReference type="RefSeq" id="NP_566703.4">
    <property type="nucleotide sequence ID" value="NM_113122.5"/>
</dbReference>
<dbReference type="FunCoup" id="Q9LHJ3">
    <property type="interactions" value="11"/>
</dbReference>
<dbReference type="STRING" id="3702.Q9LHJ3"/>
<dbReference type="PaxDb" id="3702-AT3G22240.1"/>
<dbReference type="ProteomicsDB" id="191462"/>
<dbReference type="EnsemblPlants" id="AT3G22240.1">
    <property type="protein sequence ID" value="AT3G22240.1"/>
    <property type="gene ID" value="AT3G22240"/>
</dbReference>
<dbReference type="GeneID" id="821794"/>
<dbReference type="Gramene" id="AT3G22240.1">
    <property type="protein sequence ID" value="AT3G22240.1"/>
    <property type="gene ID" value="AT3G22240"/>
</dbReference>
<dbReference type="KEGG" id="ath:AT3G22240"/>
<dbReference type="Araport" id="AT3G22240"/>
<dbReference type="TAIR" id="AT3G22240">
    <property type="gene designation" value="ATHCYSTM9"/>
</dbReference>
<dbReference type="eggNOG" id="ENOG502S924">
    <property type="taxonomic scope" value="Eukaryota"/>
</dbReference>
<dbReference type="HOGENOM" id="CLU_128451_2_2_1"/>
<dbReference type="InParanoid" id="Q9LHJ3"/>
<dbReference type="OMA" id="SHFCVAD"/>
<dbReference type="OrthoDB" id="785836at2759"/>
<dbReference type="PhylomeDB" id="Q9LHJ3"/>
<dbReference type="PRO" id="PR:Q9LHJ3"/>
<dbReference type="Proteomes" id="UP000006548">
    <property type="component" value="Chromosome 3"/>
</dbReference>
<dbReference type="ExpressionAtlas" id="Q9LHJ3">
    <property type="expression patterns" value="baseline and differential"/>
</dbReference>
<dbReference type="GO" id="GO:0005737">
    <property type="term" value="C:cytoplasm"/>
    <property type="evidence" value="ECO:0000314"/>
    <property type="project" value="TAIR"/>
</dbReference>
<dbReference type="GO" id="GO:0005634">
    <property type="term" value="C:nucleus"/>
    <property type="evidence" value="ECO:0000314"/>
    <property type="project" value="UniProtKB"/>
</dbReference>
<dbReference type="GO" id="GO:0005886">
    <property type="term" value="C:plasma membrane"/>
    <property type="evidence" value="ECO:0000314"/>
    <property type="project" value="UniProtKB"/>
</dbReference>
<dbReference type="InterPro" id="IPR028144">
    <property type="entry name" value="CYSTM_dom"/>
</dbReference>
<dbReference type="InterPro" id="IPR044850">
    <property type="entry name" value="WIH1-like"/>
</dbReference>
<dbReference type="PANTHER" id="PTHR31568:SF122">
    <property type="entry name" value="PROTEIN CYSTEINE-RICH TRANSMEMBRANE MODULE 9"/>
    <property type="match status" value="1"/>
</dbReference>
<dbReference type="PANTHER" id="PTHR31568">
    <property type="entry name" value="RCG49325, ISOFORM CRA_A"/>
    <property type="match status" value="1"/>
</dbReference>
<dbReference type="Pfam" id="PF12734">
    <property type="entry name" value="CYSTM"/>
    <property type="match status" value="1"/>
</dbReference>
<sequence>MNPSEQNHLSVEKPSQTSSGPYTSPPPIGYPTRDAMVGDPPAAAVETKSKGDGFWKGCCAAICCCCVLDACF</sequence>
<organism>
    <name type="scientific">Arabidopsis thaliana</name>
    <name type="common">Mouse-ear cress</name>
    <dbReference type="NCBI Taxonomy" id="3702"/>
    <lineage>
        <taxon>Eukaryota</taxon>
        <taxon>Viridiplantae</taxon>
        <taxon>Streptophyta</taxon>
        <taxon>Embryophyta</taxon>
        <taxon>Tracheophyta</taxon>
        <taxon>Spermatophyta</taxon>
        <taxon>Magnoliopsida</taxon>
        <taxon>eudicotyledons</taxon>
        <taxon>Gunneridae</taxon>
        <taxon>Pentapetalae</taxon>
        <taxon>rosids</taxon>
        <taxon>malvids</taxon>
        <taxon>Brassicales</taxon>
        <taxon>Brassicaceae</taxon>
        <taxon>Camelineae</taxon>
        <taxon>Arabidopsis</taxon>
    </lineage>
</organism>
<keyword id="KW-1003">Cell membrane</keyword>
<keyword id="KW-0472">Membrane</keyword>
<keyword id="KW-0539">Nucleus</keyword>
<keyword id="KW-1185">Reference proteome</keyword>
<keyword id="KW-0812">Transmembrane</keyword>
<keyword id="KW-1133">Transmembrane helix</keyword>
<proteinExistence type="evidence at protein level"/>
<comment type="function">
    <text evidence="4">Involved in resistance to abiotic stress.</text>
</comment>
<comment type="subunit">
    <text evidence="3">Heterodimers (PubMed:29272523). Interacts with WIH1/CYSTM13 (PubMed:29272523).</text>
</comment>
<comment type="subcellular location">
    <subcellularLocation>
        <location evidence="3">Cell membrane</location>
        <topology evidence="1">Single-pass membrane protein</topology>
    </subcellularLocation>
    <subcellularLocation>
        <location evidence="3">Nucleus</location>
    </subcellularLocation>
</comment>
<comment type="tissue specificity">
    <text evidence="3">Mostly expressed in roots and flowers and, to a lower extent, in stems, siliques and leaves.</text>
</comment>
<comment type="induction">
    <text evidence="3">Induced by heat in shoots (PubMed:29272523). Repressed in roots in response to drought, oxidation stress and salt (PubMed:29272523).</text>
</comment>
<comment type="similarity">
    <text evidence="5">Belongs to the CYSTM1 family.</text>
</comment>
<reference key="1">
    <citation type="journal article" date="2000" name="DNA Res.">
        <title>Structural analysis of Arabidopsis thaliana chromosome 3. II. Sequence features of the 4,251,695 bp regions covered by 90 P1, TAC and BAC clones.</title>
        <authorList>
            <person name="Kaneko T."/>
            <person name="Katoh T."/>
            <person name="Sato S."/>
            <person name="Nakamura Y."/>
            <person name="Asamizu E."/>
            <person name="Tabata S."/>
        </authorList>
    </citation>
    <scope>NUCLEOTIDE SEQUENCE [LARGE SCALE GENOMIC DNA]</scope>
    <source>
        <strain>cv. Columbia</strain>
    </source>
</reference>
<reference key="2">
    <citation type="journal article" date="2017" name="Plant J.">
        <title>Araport11: a complete reannotation of the Arabidopsis thaliana reference genome.</title>
        <authorList>
            <person name="Cheng C.Y."/>
            <person name="Krishnakumar V."/>
            <person name="Chan A.P."/>
            <person name="Thibaud-Nissen F."/>
            <person name="Schobel S."/>
            <person name="Town C.D."/>
        </authorList>
    </citation>
    <scope>GENOME REANNOTATION</scope>
    <source>
        <strain>cv. Columbia</strain>
    </source>
</reference>
<reference key="3">
    <citation type="submission" date="2004-09" db="EMBL/GenBank/DDBJ databases">
        <title>Large-scale analysis of RIKEN Arabidopsis full-length (RAFL) cDNAs.</title>
        <authorList>
            <person name="Totoki Y."/>
            <person name="Seki M."/>
            <person name="Ishida J."/>
            <person name="Nakajima M."/>
            <person name="Enju A."/>
            <person name="Kamiya A."/>
            <person name="Narusaka M."/>
            <person name="Shin-i T."/>
            <person name="Nakagawa M."/>
            <person name="Sakamoto N."/>
            <person name="Oishi K."/>
            <person name="Kohara Y."/>
            <person name="Kobayashi M."/>
            <person name="Toyoda A."/>
            <person name="Sakaki Y."/>
            <person name="Sakurai T."/>
            <person name="Iida K."/>
            <person name="Akiyama K."/>
            <person name="Satou M."/>
            <person name="Toyoda T."/>
            <person name="Konagaya A."/>
            <person name="Carninci P."/>
            <person name="Kawai J."/>
            <person name="Hayashizaki Y."/>
            <person name="Shinozaki K."/>
        </authorList>
    </citation>
    <scope>NUCLEOTIDE SEQUENCE [LARGE SCALE MRNA]</scope>
    <source>
        <strain>cv. Columbia</strain>
    </source>
</reference>
<reference key="4">
    <citation type="submission" date="2002-03" db="EMBL/GenBank/DDBJ databases">
        <title>Full-length cDNA from Arabidopsis thaliana.</title>
        <authorList>
            <person name="Brover V.V."/>
            <person name="Troukhan M.E."/>
            <person name="Alexandrov N.A."/>
            <person name="Lu Y.-P."/>
            <person name="Flavell R.B."/>
            <person name="Feldmann K.A."/>
        </authorList>
    </citation>
    <scope>NUCLEOTIDE SEQUENCE [LARGE SCALE MRNA]</scope>
</reference>
<reference key="5">
    <citation type="journal article" date="2018" name="Plant Cell Physiol.">
        <title>CYSTM, a novel non-secreted cysteine-rich peptide family, involved in environmental stresses in Arabidopsis thaliana.</title>
        <authorList>
            <person name="Xu Y."/>
            <person name="Yu Z."/>
            <person name="Zhang D."/>
            <person name="Huang J."/>
            <person name="Wu C."/>
            <person name="Yang G."/>
            <person name="Yan K."/>
            <person name="Zhang S."/>
            <person name="Zheng C."/>
        </authorList>
    </citation>
    <scope>FUNCTION</scope>
    <scope>INTERACTION WITH WIH1/CYSTM13</scope>
    <scope>TISSUE SPECIFICITY</scope>
    <scope>INDUCTION BY SALT; HEAT; DROUGHT AND OXIDATION</scope>
    <scope>SUBCELLULAR LOCATION</scope>
    <source>
        <strain>cv. Columbia</strain>
    </source>
</reference>